<dbReference type="EC" id="2.7.7.48" evidence="1"/>
<dbReference type="EC" id="3.1.-.-" evidence="1"/>
<dbReference type="EMBL" id="EU627612">
    <property type="protein sequence ID" value="ACC94300.1"/>
    <property type="molecule type" value="Genomic_RNA"/>
</dbReference>
<dbReference type="RefSeq" id="YP_001936026.1">
    <property type="nucleotide sequence ID" value="NC_010760.1"/>
</dbReference>
<dbReference type="SMR" id="B2MW49"/>
<dbReference type="KEGG" id="vg:6334524"/>
<dbReference type="Proteomes" id="UP000009262">
    <property type="component" value="Genome"/>
</dbReference>
<dbReference type="GO" id="GO:0030430">
    <property type="term" value="C:host cell cytoplasm"/>
    <property type="evidence" value="ECO:0007669"/>
    <property type="project" value="UniProtKB-SubCell"/>
</dbReference>
<dbReference type="GO" id="GO:0044423">
    <property type="term" value="C:virion component"/>
    <property type="evidence" value="ECO:0007669"/>
    <property type="project" value="UniProtKB-KW"/>
</dbReference>
<dbReference type="GO" id="GO:0016787">
    <property type="term" value="F:hydrolase activity"/>
    <property type="evidence" value="ECO:0007669"/>
    <property type="project" value="UniProtKB-KW"/>
</dbReference>
<dbReference type="GO" id="GO:0046872">
    <property type="term" value="F:metal ion binding"/>
    <property type="evidence" value="ECO:0007669"/>
    <property type="project" value="UniProtKB-KW"/>
</dbReference>
<dbReference type="GO" id="GO:0000166">
    <property type="term" value="F:nucleotide binding"/>
    <property type="evidence" value="ECO:0007669"/>
    <property type="project" value="UniProtKB-UniRule"/>
</dbReference>
<dbReference type="GO" id="GO:0003968">
    <property type="term" value="F:RNA-directed RNA polymerase activity"/>
    <property type="evidence" value="ECO:0007669"/>
    <property type="project" value="UniProtKB-UniRule"/>
</dbReference>
<dbReference type="GO" id="GO:0075526">
    <property type="term" value="P:cap snatching"/>
    <property type="evidence" value="ECO:0007669"/>
    <property type="project" value="UniProtKB-UniRule"/>
</dbReference>
<dbReference type="GO" id="GO:0039689">
    <property type="term" value="P:negative stranded viral RNA replication"/>
    <property type="evidence" value="ECO:0000250"/>
    <property type="project" value="UniProtKB"/>
</dbReference>
<dbReference type="GO" id="GO:0039696">
    <property type="term" value="P:RNA-templated viral transcription"/>
    <property type="evidence" value="ECO:0000250"/>
    <property type="project" value="UniProtKB"/>
</dbReference>
<dbReference type="Gene3D" id="3.30.70.2640">
    <property type="entry name" value="Arenavirus RNA polymerase"/>
    <property type="match status" value="1"/>
</dbReference>
<dbReference type="Gene3D" id="1.20.1440.300">
    <property type="entry name" value="RNA-directed RNA polymerase L, helical domain"/>
    <property type="match status" value="1"/>
</dbReference>
<dbReference type="HAMAP" id="MF_04086">
    <property type="entry name" value="ARENA_L"/>
    <property type="match status" value="1"/>
</dbReference>
<dbReference type="InterPro" id="IPR026382">
    <property type="entry name" value="CapSnatch_arenavir"/>
</dbReference>
<dbReference type="InterPro" id="IPR048006">
    <property type="entry name" value="CapSnatch_bunyavir"/>
</dbReference>
<dbReference type="InterPro" id="IPR007099">
    <property type="entry name" value="RNA-dir_pol_NSvirus"/>
</dbReference>
<dbReference type="InterPro" id="IPR010453">
    <property type="entry name" value="RNA_pol_arenavir"/>
</dbReference>
<dbReference type="NCBIfam" id="TIGR04202">
    <property type="entry name" value="capSnatchArena"/>
    <property type="match status" value="1"/>
</dbReference>
<dbReference type="Pfam" id="PF06317">
    <property type="entry name" value="Arena_RNA_pol"/>
    <property type="match status" value="1"/>
</dbReference>
<dbReference type="Pfam" id="PF17296">
    <property type="entry name" value="ArenaCapSnatch"/>
    <property type="match status" value="1"/>
</dbReference>
<dbReference type="PIRSF" id="PIRSF000836">
    <property type="entry name" value="L_ArenaV"/>
    <property type="match status" value="1"/>
</dbReference>
<dbReference type="PROSITE" id="PS50525">
    <property type="entry name" value="RDRP_SSRNA_NEG_SEG"/>
    <property type="match status" value="1"/>
</dbReference>
<organismHost>
    <name type="scientific">Calomys callosus</name>
    <name type="common">Large vesper mouse</name>
    <dbReference type="NCBI Taxonomy" id="56210"/>
</organismHost>
<feature type="chain" id="PRO_0000361640" description="RNA-directed RNA polymerase L">
    <location>
        <begin position="1"/>
        <end position="2238"/>
    </location>
</feature>
<feature type="domain" description="RdRp catalytic" evidence="1">
    <location>
        <begin position="1188"/>
        <end position="1387"/>
    </location>
</feature>
<feature type="region of interest" description="Endonuclease" evidence="1">
    <location>
        <begin position="26"/>
        <end position="284"/>
    </location>
</feature>
<feature type="active site" evidence="1">
    <location>
        <position position="115"/>
    </location>
</feature>
<feature type="binding site" evidence="1">
    <location>
        <position position="51"/>
    </location>
    <ligand>
        <name>Mn(2+)</name>
        <dbReference type="ChEBI" id="CHEBI:29035"/>
        <label>1</label>
    </ligand>
</feature>
<feature type="binding site" evidence="1">
    <location>
        <position position="89"/>
    </location>
    <ligand>
        <name>Mn(2+)</name>
        <dbReference type="ChEBI" id="CHEBI:29035"/>
        <label>1</label>
    </ligand>
</feature>
<feature type="binding site" evidence="1">
    <location>
        <position position="89"/>
    </location>
    <ligand>
        <name>Mn(2+)</name>
        <dbReference type="ChEBI" id="CHEBI:29035"/>
        <label>2</label>
    </ligand>
</feature>
<feature type="binding site" evidence="1">
    <location>
        <position position="102"/>
    </location>
    <ligand>
        <name>Mn(2+)</name>
        <dbReference type="ChEBI" id="CHEBI:29035"/>
        <label>1</label>
    </ligand>
</feature>
<feature type="binding site" evidence="1">
    <location>
        <position position="1346"/>
    </location>
    <ligand>
        <name>Mg(2+)</name>
        <dbReference type="ChEBI" id="CHEBI:18420"/>
        <note>catalytic; for RdRp activity</note>
    </ligand>
</feature>
<accession>B2MW49</accession>
<reference key="1">
    <citation type="journal article" date="2008" name="Curr. Opin. Microbiol.">
        <title>Phylogeny of the genus Arenavirus.</title>
        <authorList>
            <person name="Charrel R.N."/>
            <person name="de Lamballerie X."/>
            <person name="Emonet S."/>
        </authorList>
    </citation>
    <scope>NUCLEOTIDE SEQUENCE [GENOMIC RNA]</scope>
</reference>
<reference key="2">
    <citation type="journal article" date="2017" name="Crit. Rev. Microbiol.">
        <title>Bunyaviridae RdRps: structure, motifs, and RNA synthesis machinery.</title>
        <authorList>
            <person name="Amroun A."/>
            <person name="Priet S."/>
            <person name="de Lamballerie X."/>
            <person name="Querat G."/>
        </authorList>
    </citation>
    <scope>REVIEW</scope>
</reference>
<reference key="3">
    <citation type="journal article" date="2020" name="Trends Microbiol.">
        <title>The Cap-Snatching Mechanism of Bunyaviruses.</title>
        <authorList>
            <person name="Olschewski S."/>
            <person name="Cusack S."/>
            <person name="Rosenthal M."/>
        </authorList>
    </citation>
    <scope>REVIEW</scope>
</reference>
<name>L_LATVB</name>
<keyword id="KW-1157">Cap snatching</keyword>
<keyword id="KW-1035">Host cytoplasm</keyword>
<keyword id="KW-0378">Hydrolase</keyword>
<keyword id="KW-0460">Magnesium</keyword>
<keyword id="KW-0464">Manganese</keyword>
<keyword id="KW-0479">Metal-binding</keyword>
<keyword id="KW-0547">Nucleotide-binding</keyword>
<keyword id="KW-0548">Nucleotidyltransferase</keyword>
<keyword id="KW-1185">Reference proteome</keyword>
<keyword id="KW-0696">RNA-directed RNA polymerase</keyword>
<keyword id="KW-0808">Transferase</keyword>
<keyword id="KW-0693">Viral RNA replication</keyword>
<keyword id="KW-0946">Virion</keyword>
<comment type="function">
    <text evidence="1">RNA-dependent RNA polymerase, which is responsible for the replication and transcription of the viral RNA genome using antigenomic RNA as an intermediate. During transcription, synthesizes subgenomic RNAs and assures their capping by a cap-snatching mechanism, which involves the endonuclease activity cleaving the host capped pre-mRNAs. These short capped RNAs are then used as primers for viral transcription. The 3'-end of subgenomic mRNAs molecules are heterogeneous and not polyadenylated. The replicase function is to direct synthesis of antigenomic and genomic RNA which are encapsidated and non capped. As a consequence of the use of the same enzyme for both transcription and replication, these mechanisms need to be well coordinated. These processes may be regulated by proteins N and Z in a dose-dependent manner. Z protein inhibits the viral polymerase L und thus the viral transcription and RNA synthesis.</text>
</comment>
<comment type="catalytic activity">
    <reaction evidence="1">
        <text>RNA(n) + a ribonucleoside 5'-triphosphate = RNA(n+1) + diphosphate</text>
        <dbReference type="Rhea" id="RHEA:21248"/>
        <dbReference type="Rhea" id="RHEA-COMP:14527"/>
        <dbReference type="Rhea" id="RHEA-COMP:17342"/>
        <dbReference type="ChEBI" id="CHEBI:33019"/>
        <dbReference type="ChEBI" id="CHEBI:61557"/>
        <dbReference type="ChEBI" id="CHEBI:140395"/>
        <dbReference type="EC" id="2.7.7.48"/>
    </reaction>
</comment>
<comment type="cofactor">
    <cofactor evidence="1">
        <name>Mn(2+)</name>
        <dbReference type="ChEBI" id="CHEBI:29035"/>
    </cofactor>
    <text evidence="1">For endonuclease activity. Binds 2 Mn(2+) ions in the active site. The divalent metal ions are crucial for catalytic activity.</text>
</comment>
<comment type="cofactor">
    <cofactor evidence="1">
        <name>Mg(2+)</name>
        <dbReference type="ChEBI" id="CHEBI:18420"/>
    </cofactor>
    <cofactor evidence="1">
        <name>Mn(2+)</name>
        <dbReference type="ChEBI" id="CHEBI:29035"/>
    </cofactor>
    <text evidence="1">For polymerase activity.</text>
</comment>
<comment type="subunit">
    <text evidence="1">Homomultimer; the oligomeric structure is essential for the polymerase activity. Interacts with nucleoprotein N. Interacts with protein Z; this interaction inhibits viral transcription and replication, Z partially blocks the product exit tunnel for the releasing nascent RNA product.</text>
</comment>
<comment type="subcellular location">
    <subcellularLocation>
        <location evidence="1">Virion</location>
    </subcellularLocation>
    <subcellularLocation>
        <location evidence="1">Host cytoplasm</location>
    </subcellularLocation>
</comment>
<comment type="domain">
    <text evidence="1">The N-terminus contains the endonuclease activity (endoN). The central region contains the RdRp activity.</text>
</comment>
<comment type="miscellaneous">
    <text evidence="1">Classified as His(-) endonuclease since it does not have a histidine upstream of the active site that coordinates the first cation. His(-) endonucleases display very low activity in vitro, although they are clearly active in vivo.</text>
</comment>
<comment type="similarity">
    <text evidence="1">Belongs to the Bunyavirales RNA polymerase family.</text>
</comment>
<proteinExistence type="inferred from homology"/>
<organism>
    <name type="scientific">Latino mammarenavirus (isolate Rat/Bolivia/MARU 1924/1965)</name>
    <name type="common">LATV</name>
    <dbReference type="NCBI Taxonomy" id="3052311"/>
    <lineage>
        <taxon>Viruses</taxon>
        <taxon>Riboviria</taxon>
        <taxon>Orthornavirae</taxon>
        <taxon>Negarnaviricota</taxon>
        <taxon>Polyploviricotina</taxon>
        <taxon>Ellioviricetes</taxon>
        <taxon>Bunyavirales</taxon>
        <taxon>Arenaviridae</taxon>
        <taxon>Mammarenavirus</taxon>
    </lineage>
</organism>
<sequence>MDDIVNQLFDLLRKHFPARPKVTEQITLVTCQNDAKMILTEGFKLLSLLVELDSAEANNCTHNSDSLTIEGILRKEGIMSIALPRIVPDGFSLYGNVLILLETFVRVNPVSFEQKYNQDMSKLLSLKDDLSLCGITLVPLVDGRTNYYNRFVDDWVIERFRWLLLQLIKFVRESGEEIEELEYQRLITSLSKLENQSLGFENIEKLPQTGLKYRDELKKHMFGNLSSKMKESEIQENLINVLKEFFIKEYKNNKSLHKFVFTNRDGLLAKLDQITHHSEHPVDCMSCSSKLYSIIDKLGTLKRQPLHSDYHPIYAKMWHSDSLSQAEQIYLKLLSQCNKIKSAKLLNTRRNTLLFLDLIMVNFIVHSWKQNPEVLTEYRRCGLMAGQLALFSNDRYFDLNELRNKLINKLKNCENWIAKCVHQLKKQEFVALDDVLVWATVPDFESLELITTSLELKRFKLQYGKDKVDHNEHPIGPLSEETFFRNLNVLSSVCLALVNSMKTSFTSKTVINERRASNHFGEVDLIECYCQRFFLSKDLVGILSYQKTGEKSRCYSISLISNGELEYIGSFYCDPKRFFLPIFSQIVLLNMSREMMLWLADLNLNDSLVGDKLRKLILLIVTNPSKRNQTFLQGLRYFIMAYVNQFHHVELMDRLIVPVKSYCESCLQRISFDIFRLILEGDYDNEHMTRKFKFLLNVSYLCHLITKETPDRLTDQIKCFEKFMEPKLKFESVIVNPSLTENMTEDEEAQVLKGVDKLLGKSLSCSTDLTSPGVSKTLLSMCVSSFNRGLLNVNGHLRQDPYRPNFTSTALDLSSNKSVVVPKLDELGNPISRYDYELLVSSCVTNLAEGFKTKGKFKLDINCQEYTIMRNLTNLVLKNEDKSDAKIKGEKPCSFELSQWMETLSEEQLEVLEKLKGDVNIALGKLKEKGRSKSNSTLKEGVKRLDSGNTLAGCADPQQVLVNLWSEFGVMKQILVEVSLHEIKDFDPDIIPPQMIQKLVFKVNNSNYKSLFFLDSVINPCPLELLIKNMTTATFDDGELFECFKYLLITAGFDQKLGTYEHKNRSRFGFKFEALKVREEGRMSSRESNSEAIARRLDKSVFTNSALRNLCFYSDESPISYSHVSPDVGKLKFGLSYKEQVGSNRELYVGDLNTKLMTRLIEDFSESVVSNMSYSCLNNEAEFEKAITDMKMCVNLGDMSLSLDHSKWGPHMSPVIFAAFLQGLDLKYGPSLCKLNTDPIITLLSWHIHKVVEVPYNVIHAYVTGMIKRQLGLMNMSGSTITESFVHRLLKEKREPLSHVMSVIDMGQGILHNMSDLYGLVTEQFINYAIHFLFDMNTTSYTSSDDQISMIKIGSGMCNFESLKVIEEWETILNFHAFISTKFNKFVSPKTVAGTFAAEFKSRFFVWGEEVPLLTKFVSAALHNVKCKTPVQLSETVDTICDQCVANGVSVEIVSYICNRTNRLIRYSGFGEHPFLNVENLDVKDWVDGSRGYRLQRNIELHLESDGCTSFIRQAARKVFSNIKSGKIVEQALVDLVQEDGDKAITGFLRSVGVSEEDIALLCRIRWINLCAHGDLRLVLRTKLMSSRRIIETEEIPSLIKSIQSKLSKNFVKGAKKILAESINKSAFQSSIASGFIGFCQSVGSKCVRTGEGGFYYIKELKSKVDLYCPCEVCARWKGVTYCSSSCLKIESFTRPLMWDYFSLVLSNACELGEWVFEDVEYPKDINFLRNPNLFWLVKPRVSCQIEEKLGLTHILQSIRRNYPQLFETHLSPFMSDFQAGRTLGTMTVKFLDVCVALDLANENLGIVKHFLKNRRHDIYIVKQDESSQSHIRCQKSICVDVELTSTQVCQNFMTQLIMSSLVQPLVLTSSELKKFNWFQQVLTLETDEDVDLGLLTDFALQVKKFNVDRAMHSEDLSAGYISSTVSVTTFSLSKPIFLQQIDSDFIGGTEDRKDFIQMIKSEFTKNSIDLQFVIQISHVKRALRFNLKRTTVYTLIVRTSILKEVILNSLGQEDQSVELVVDDLELFCSGHDGNHFTLDAAPLIVQEPLINGNLKFDLVSRLEEEDLTFSYSESLPSFHFNFEKYKHELCNKFSYHLSGPVIVDEPLVLDRGVILHGGRKLTTLQFDFSADRIMQALSELESLSSRDLFLFNLWVYSDQTKSKLYIHQDKLLLLVESYLSELNSSLARYDSWLNLGNYMICYSKSFKCLMISDTNGRNRLKGILCRRLIEEEVQDIE</sequence>
<protein>
    <recommendedName>
        <fullName evidence="1">RNA-directed RNA polymerase L</fullName>
        <shortName evidence="1">Protein L</shortName>
        <ecNumber evidence="1">2.7.7.48</ecNumber>
    </recommendedName>
    <alternativeName>
        <fullName evidence="1">Large structural protein</fullName>
    </alternativeName>
    <alternativeName>
        <fullName evidence="1">Replicase</fullName>
    </alternativeName>
    <alternativeName>
        <fullName evidence="1">Transcriptase</fullName>
    </alternativeName>
    <domain>
        <recommendedName>
            <fullName evidence="1">cap-snatching endonuclease</fullName>
            <ecNumber evidence="1">3.1.-.-</ecNumber>
        </recommendedName>
    </domain>
</protein>
<gene>
    <name evidence="1" type="primary">L</name>
</gene>
<evidence type="ECO:0000255" key="1">
    <source>
        <dbReference type="HAMAP-Rule" id="MF_04086"/>
    </source>
</evidence>